<name>PLA17_ARATH</name>
<keyword id="KW-0150">Chloroplast</keyword>
<keyword id="KW-0378">Hydrolase</keyword>
<keyword id="KW-0442">Lipid degradation</keyword>
<keyword id="KW-0443">Lipid metabolism</keyword>
<keyword id="KW-0934">Plastid</keyword>
<keyword id="KW-1185">Reference proteome</keyword>
<keyword id="KW-0809">Transit peptide</keyword>
<dbReference type="EC" id="3.1.1.-" evidence="5"/>
<dbReference type="EMBL" id="AC024261">
    <property type="protein sequence ID" value="AAG52635.1"/>
    <property type="molecule type" value="Genomic_DNA"/>
</dbReference>
<dbReference type="EMBL" id="CP002684">
    <property type="protein sequence ID" value="AEE32668.1"/>
    <property type="molecule type" value="Genomic_DNA"/>
</dbReference>
<dbReference type="EMBL" id="AF424572">
    <property type="protein sequence ID" value="AAL11566.1"/>
    <property type="molecule type" value="mRNA"/>
</dbReference>
<dbReference type="EMBL" id="AY142023">
    <property type="protein sequence ID" value="AAM98287.1"/>
    <property type="molecule type" value="mRNA"/>
</dbReference>
<dbReference type="EMBL" id="AK226962">
    <property type="protein sequence ID" value="BAE99030.1"/>
    <property type="molecule type" value="mRNA"/>
</dbReference>
<dbReference type="PIR" id="F96552">
    <property type="entry name" value="F96552"/>
</dbReference>
<dbReference type="RefSeq" id="NP_564590.1">
    <property type="nucleotide sequence ID" value="NM_104022.5"/>
</dbReference>
<dbReference type="SMR" id="Q9C8J6"/>
<dbReference type="FunCoup" id="Q9C8J6">
    <property type="interactions" value="45"/>
</dbReference>
<dbReference type="STRING" id="3702.Q9C8J6"/>
<dbReference type="SwissLipids" id="SLP:000001921"/>
<dbReference type="ESTHER" id="arath-PLA17">
    <property type="family name" value="Plant_phospholipase"/>
</dbReference>
<dbReference type="iPTMnet" id="Q9C8J6"/>
<dbReference type="PaxDb" id="3702-AT1G51440.1"/>
<dbReference type="ProteomicsDB" id="235067"/>
<dbReference type="EnsemblPlants" id="AT1G51440.1">
    <property type="protein sequence ID" value="AT1G51440.1"/>
    <property type="gene ID" value="AT1G51440"/>
</dbReference>
<dbReference type="GeneID" id="841569"/>
<dbReference type="Gramene" id="AT1G51440.1">
    <property type="protein sequence ID" value="AT1G51440.1"/>
    <property type="gene ID" value="AT1G51440"/>
</dbReference>
<dbReference type="KEGG" id="ath:AT1G51440"/>
<dbReference type="Araport" id="AT1G51440"/>
<dbReference type="TAIR" id="AT1G51440">
    <property type="gene designation" value="DALL2"/>
</dbReference>
<dbReference type="eggNOG" id="KOG4569">
    <property type="taxonomic scope" value="Eukaryota"/>
</dbReference>
<dbReference type="HOGENOM" id="CLU_018841_1_0_1"/>
<dbReference type="InParanoid" id="Q9C8J6"/>
<dbReference type="OMA" id="VTYVEWI"/>
<dbReference type="PhylomeDB" id="Q9C8J6"/>
<dbReference type="BioCyc" id="ARA:AT1G51440-MONOMER"/>
<dbReference type="PRO" id="PR:Q9C8J6"/>
<dbReference type="Proteomes" id="UP000006548">
    <property type="component" value="Chromosome 1"/>
</dbReference>
<dbReference type="ExpressionAtlas" id="Q9C8J6">
    <property type="expression patterns" value="baseline and differential"/>
</dbReference>
<dbReference type="GO" id="GO:0009507">
    <property type="term" value="C:chloroplast"/>
    <property type="evidence" value="ECO:0000314"/>
    <property type="project" value="TAIR"/>
</dbReference>
<dbReference type="GO" id="GO:0047714">
    <property type="term" value="F:galactolipase activity"/>
    <property type="evidence" value="ECO:0000314"/>
    <property type="project" value="TAIR"/>
</dbReference>
<dbReference type="GO" id="GO:0008970">
    <property type="term" value="F:phospholipase A1 activity"/>
    <property type="evidence" value="ECO:0000314"/>
    <property type="project" value="TAIR"/>
</dbReference>
<dbReference type="GO" id="GO:0004806">
    <property type="term" value="F:triacylglycerol lipase activity"/>
    <property type="evidence" value="ECO:0000314"/>
    <property type="project" value="TAIR"/>
</dbReference>
<dbReference type="GO" id="GO:0016042">
    <property type="term" value="P:lipid catabolic process"/>
    <property type="evidence" value="ECO:0007669"/>
    <property type="project" value="UniProtKB-KW"/>
</dbReference>
<dbReference type="CDD" id="cd00519">
    <property type="entry name" value="Lipase_3"/>
    <property type="match status" value="1"/>
</dbReference>
<dbReference type="FunFam" id="3.40.50.1820:FF:000065">
    <property type="entry name" value="Phospholipase A1-II 3"/>
    <property type="match status" value="1"/>
</dbReference>
<dbReference type="Gene3D" id="3.40.50.1820">
    <property type="entry name" value="alpha/beta hydrolase"/>
    <property type="match status" value="1"/>
</dbReference>
<dbReference type="InterPro" id="IPR029058">
    <property type="entry name" value="AB_hydrolase_fold"/>
</dbReference>
<dbReference type="InterPro" id="IPR002921">
    <property type="entry name" value="Fungal_lipase-type"/>
</dbReference>
<dbReference type="PANTHER" id="PTHR31403">
    <property type="entry name" value="PHOSPHOLIPASE A1-IBETA2, CHLOROPLASTIC"/>
    <property type="match status" value="1"/>
</dbReference>
<dbReference type="PANTHER" id="PTHR31403:SF7">
    <property type="entry name" value="PHOSPHOLIPASE A1-IGAMMA3, CHLOROPLASTIC"/>
    <property type="match status" value="1"/>
</dbReference>
<dbReference type="Pfam" id="PF01764">
    <property type="entry name" value="Lipase_3"/>
    <property type="match status" value="1"/>
</dbReference>
<dbReference type="SUPFAM" id="SSF53474">
    <property type="entry name" value="alpha/beta-Hydrolases"/>
    <property type="match status" value="1"/>
</dbReference>
<dbReference type="PROSITE" id="PS00120">
    <property type="entry name" value="LIPASE_SER"/>
    <property type="match status" value="1"/>
</dbReference>
<evidence type="ECO:0000250" key="1">
    <source>
        <dbReference type="UniProtKB" id="Q948R1"/>
    </source>
</evidence>
<evidence type="ECO:0000255" key="2"/>
<evidence type="ECO:0000256" key="3">
    <source>
        <dbReference type="SAM" id="MobiDB-lite"/>
    </source>
</evidence>
<evidence type="ECO:0000269" key="4">
    <source>
    </source>
</evidence>
<evidence type="ECO:0000269" key="5">
    <source>
    </source>
</evidence>
<evidence type="ECO:0000269" key="6">
    <source>
    </source>
</evidence>
<evidence type="ECO:0000269" key="7">
    <source>
    </source>
</evidence>
<evidence type="ECO:0000303" key="8">
    <source>
    </source>
</evidence>
<evidence type="ECO:0000303" key="9">
    <source>
    </source>
</evidence>
<evidence type="ECO:0000305" key="10"/>
<evidence type="ECO:0000312" key="11">
    <source>
        <dbReference type="Araport" id="AT1G51440"/>
    </source>
</evidence>
<evidence type="ECO:0000312" key="12">
    <source>
        <dbReference type="EMBL" id="AAG52635.1"/>
    </source>
</evidence>
<reference key="1">
    <citation type="journal article" date="2000" name="Nature">
        <title>Sequence and analysis of chromosome 1 of the plant Arabidopsis thaliana.</title>
        <authorList>
            <person name="Theologis A."/>
            <person name="Ecker J.R."/>
            <person name="Palm C.J."/>
            <person name="Federspiel N.A."/>
            <person name="Kaul S."/>
            <person name="White O."/>
            <person name="Alonso J."/>
            <person name="Altafi H."/>
            <person name="Araujo R."/>
            <person name="Bowman C.L."/>
            <person name="Brooks S.Y."/>
            <person name="Buehler E."/>
            <person name="Chan A."/>
            <person name="Chao Q."/>
            <person name="Chen H."/>
            <person name="Cheuk R.F."/>
            <person name="Chin C.W."/>
            <person name="Chung M.K."/>
            <person name="Conn L."/>
            <person name="Conway A.B."/>
            <person name="Conway A.R."/>
            <person name="Creasy T.H."/>
            <person name="Dewar K."/>
            <person name="Dunn P."/>
            <person name="Etgu P."/>
            <person name="Feldblyum T.V."/>
            <person name="Feng J.-D."/>
            <person name="Fong B."/>
            <person name="Fujii C.Y."/>
            <person name="Gill J.E."/>
            <person name="Goldsmith A.D."/>
            <person name="Haas B."/>
            <person name="Hansen N.F."/>
            <person name="Hughes B."/>
            <person name="Huizar L."/>
            <person name="Hunter J.L."/>
            <person name="Jenkins J."/>
            <person name="Johnson-Hopson C."/>
            <person name="Khan S."/>
            <person name="Khaykin E."/>
            <person name="Kim C.J."/>
            <person name="Koo H.L."/>
            <person name="Kremenetskaia I."/>
            <person name="Kurtz D.B."/>
            <person name="Kwan A."/>
            <person name="Lam B."/>
            <person name="Langin-Hooper S."/>
            <person name="Lee A."/>
            <person name="Lee J.M."/>
            <person name="Lenz C.A."/>
            <person name="Li J.H."/>
            <person name="Li Y.-P."/>
            <person name="Lin X."/>
            <person name="Liu S.X."/>
            <person name="Liu Z.A."/>
            <person name="Luros J.S."/>
            <person name="Maiti R."/>
            <person name="Marziali A."/>
            <person name="Militscher J."/>
            <person name="Miranda M."/>
            <person name="Nguyen M."/>
            <person name="Nierman W.C."/>
            <person name="Osborne B.I."/>
            <person name="Pai G."/>
            <person name="Peterson J."/>
            <person name="Pham P.K."/>
            <person name="Rizzo M."/>
            <person name="Rooney T."/>
            <person name="Rowley D."/>
            <person name="Sakano H."/>
            <person name="Salzberg S.L."/>
            <person name="Schwartz J.R."/>
            <person name="Shinn P."/>
            <person name="Southwick A.M."/>
            <person name="Sun H."/>
            <person name="Tallon L.J."/>
            <person name="Tambunga G."/>
            <person name="Toriumi M.J."/>
            <person name="Town C.D."/>
            <person name="Utterback T."/>
            <person name="Van Aken S."/>
            <person name="Vaysberg M."/>
            <person name="Vysotskaia V.S."/>
            <person name="Walker M."/>
            <person name="Wu D."/>
            <person name="Yu G."/>
            <person name="Fraser C.M."/>
            <person name="Venter J.C."/>
            <person name="Davis R.W."/>
        </authorList>
    </citation>
    <scope>NUCLEOTIDE SEQUENCE [LARGE SCALE GENOMIC DNA]</scope>
    <source>
        <strain>cv. Columbia</strain>
    </source>
</reference>
<reference key="2">
    <citation type="journal article" date="2017" name="Plant J.">
        <title>Araport11: a complete reannotation of the Arabidopsis thaliana reference genome.</title>
        <authorList>
            <person name="Cheng C.Y."/>
            <person name="Krishnakumar V."/>
            <person name="Chan A.P."/>
            <person name="Thibaud-Nissen F."/>
            <person name="Schobel S."/>
            <person name="Town C.D."/>
        </authorList>
    </citation>
    <scope>GENOME REANNOTATION</scope>
    <source>
        <strain>cv. Columbia</strain>
    </source>
</reference>
<reference key="3">
    <citation type="journal article" date="2003" name="Science">
        <title>Empirical analysis of transcriptional activity in the Arabidopsis genome.</title>
        <authorList>
            <person name="Yamada K."/>
            <person name="Lim J."/>
            <person name="Dale J.M."/>
            <person name="Chen H."/>
            <person name="Shinn P."/>
            <person name="Palm C.J."/>
            <person name="Southwick A.M."/>
            <person name="Wu H.C."/>
            <person name="Kim C.J."/>
            <person name="Nguyen M."/>
            <person name="Pham P.K."/>
            <person name="Cheuk R.F."/>
            <person name="Karlin-Newmann G."/>
            <person name="Liu S.X."/>
            <person name="Lam B."/>
            <person name="Sakano H."/>
            <person name="Wu T."/>
            <person name="Yu G."/>
            <person name="Miranda M."/>
            <person name="Quach H.L."/>
            <person name="Tripp M."/>
            <person name="Chang C.H."/>
            <person name="Lee J.M."/>
            <person name="Toriumi M.J."/>
            <person name="Chan M.M."/>
            <person name="Tang C.C."/>
            <person name="Onodera C.S."/>
            <person name="Deng J.M."/>
            <person name="Akiyama K."/>
            <person name="Ansari Y."/>
            <person name="Arakawa T."/>
            <person name="Banh J."/>
            <person name="Banno F."/>
            <person name="Bowser L."/>
            <person name="Brooks S.Y."/>
            <person name="Carninci P."/>
            <person name="Chao Q."/>
            <person name="Choy N."/>
            <person name="Enju A."/>
            <person name="Goldsmith A.D."/>
            <person name="Gurjal M."/>
            <person name="Hansen N.F."/>
            <person name="Hayashizaki Y."/>
            <person name="Johnson-Hopson C."/>
            <person name="Hsuan V.W."/>
            <person name="Iida K."/>
            <person name="Karnes M."/>
            <person name="Khan S."/>
            <person name="Koesema E."/>
            <person name="Ishida J."/>
            <person name="Jiang P.X."/>
            <person name="Jones T."/>
            <person name="Kawai J."/>
            <person name="Kamiya A."/>
            <person name="Meyers C."/>
            <person name="Nakajima M."/>
            <person name="Narusaka M."/>
            <person name="Seki M."/>
            <person name="Sakurai T."/>
            <person name="Satou M."/>
            <person name="Tamse R."/>
            <person name="Vaysberg M."/>
            <person name="Wallender E.K."/>
            <person name="Wong C."/>
            <person name="Yamamura Y."/>
            <person name="Yuan S."/>
            <person name="Shinozaki K."/>
            <person name="Davis R.W."/>
            <person name="Theologis A."/>
            <person name="Ecker J.R."/>
        </authorList>
    </citation>
    <scope>NUCLEOTIDE SEQUENCE [LARGE SCALE MRNA]</scope>
    <source>
        <strain>cv. Columbia</strain>
    </source>
</reference>
<reference key="4">
    <citation type="submission" date="2006-07" db="EMBL/GenBank/DDBJ databases">
        <title>Large-scale analysis of RIKEN Arabidopsis full-length (RAFL) cDNAs.</title>
        <authorList>
            <person name="Totoki Y."/>
            <person name="Seki M."/>
            <person name="Ishida J."/>
            <person name="Nakajima M."/>
            <person name="Enju A."/>
            <person name="Kamiya A."/>
            <person name="Narusaka M."/>
            <person name="Shin-i T."/>
            <person name="Nakagawa M."/>
            <person name="Sakamoto N."/>
            <person name="Oishi K."/>
            <person name="Kohara Y."/>
            <person name="Kobayashi M."/>
            <person name="Toyoda A."/>
            <person name="Sakaki Y."/>
            <person name="Sakurai T."/>
            <person name="Iida K."/>
            <person name="Akiyama K."/>
            <person name="Satou M."/>
            <person name="Toyoda T."/>
            <person name="Konagaya A."/>
            <person name="Carninci P."/>
            <person name="Kawai J."/>
            <person name="Hayashizaki Y."/>
            <person name="Shinozaki K."/>
        </authorList>
    </citation>
    <scope>NUCLEOTIDE SEQUENCE [LARGE SCALE MRNA]</scope>
    <source>
        <strain>cv. Columbia</strain>
    </source>
</reference>
<reference key="5">
    <citation type="journal article" date="2004" name="Trends Plant Sci.">
        <title>Phospholipid-derived signaling mediated by phospholipase A in plants.</title>
        <authorList>
            <person name="Ryu S.B."/>
        </authorList>
    </citation>
    <scope>GENE FAMILY</scope>
    <scope>NOMENCLATURE</scope>
</reference>
<reference key="6">
    <citation type="journal article" date="2008" name="Dev. Cell">
        <title>Cooperation and functional diversification of two closely related galactolipase genes for jasmonate biosynthesis.</title>
        <authorList>
            <person name="Hyun Y."/>
            <person name="Choi S."/>
            <person name="Hwang H.J."/>
            <person name="Yu J."/>
            <person name="Nam S.J."/>
            <person name="Ko J."/>
            <person name="Park J.Y."/>
            <person name="Seo Y.S."/>
            <person name="Kim E.Y."/>
            <person name="Ryu S.B."/>
            <person name="Kim W.T."/>
            <person name="Lee Y.H."/>
            <person name="Kang H."/>
            <person name="Lee I."/>
        </authorList>
    </citation>
    <scope>INDUCTION</scope>
</reference>
<reference key="7">
    <citation type="journal article" date="2009" name="FEBS Lett.">
        <title>Enzymatic characterization of class I DAD1-like acylhydrolase members targeted to chloroplast in Arabidopsis.</title>
        <authorList>
            <person name="Seo Y.S."/>
            <person name="Kim E.Y."/>
            <person name="Kim J.H."/>
            <person name="Kim W.T."/>
        </authorList>
    </citation>
    <scope>CATALYTIC ACTIVITY</scope>
    <scope>FUNCTION</scope>
    <scope>SUBCELLULAR LOCATION</scope>
    <scope>TISSUE SPECIFICITY</scope>
</reference>
<reference key="8">
    <citation type="journal article" date="2010" name="Plant Physiol.">
        <title>DONGLE and DEFECTIVE IN ANTHER DEHISCENCE1 lipases are not essential for wound- and pathogen-induced jasmonate biosynthesis: redundant lipases contribute to jasmonate formation.</title>
        <authorList>
            <person name="Ellinger D."/>
            <person name="Stingl N."/>
            <person name="Kubigsteltig I.I."/>
            <person name="Bals T."/>
            <person name="Juenger M."/>
            <person name="Pollmann S."/>
            <person name="Berger S."/>
            <person name="Schuenemann D."/>
            <person name="Mueller M.J."/>
        </authorList>
    </citation>
    <scope>DISRUPTION PHENOTYPE</scope>
</reference>
<reference key="9">
    <citation type="journal article" date="2014" name="Plant Cell Rep.">
        <title>Wound-induced expression of DEFECTIVE IN ANTHER DEHISCENCE1 and DAD1-like lipase genes is mediated by both CORONATINE INSENSITIVE1-dependent and independent pathways in Arabidopsis thaliana.</title>
        <authorList>
            <person name="Rudus I."/>
            <person name="Terai H."/>
            <person name="Shimizu T."/>
            <person name="Kojima H."/>
            <person name="Hattori K."/>
            <person name="Nishimori Y."/>
            <person name="Tsukagoshi H."/>
            <person name="Kamiya Y."/>
            <person name="Seo M."/>
            <person name="Nakamura K."/>
            <person name="Kepczynski J."/>
            <person name="Ishiguro S."/>
        </authorList>
    </citation>
    <scope>INDUCTION BY WOUNDING</scope>
</reference>
<feature type="transit peptide" description="Chloroplast" evidence="2">
    <location>
        <begin position="1"/>
        <end position="52"/>
    </location>
</feature>
<feature type="chain" id="PRO_0000398881" description="Phospholipase A1-Igamma3, chloroplastic">
    <location>
        <begin position="53"/>
        <end position="527"/>
    </location>
</feature>
<feature type="region of interest" description="Disordered" evidence="3">
    <location>
        <begin position="55"/>
        <end position="82"/>
    </location>
</feature>
<feature type="short sequence motif" description="GXSXG" evidence="1">
    <location>
        <begin position="300"/>
        <end position="304"/>
    </location>
</feature>
<feature type="compositionally biased region" description="Low complexity" evidence="3">
    <location>
        <begin position="55"/>
        <end position="65"/>
    </location>
</feature>
<feature type="compositionally biased region" description="Basic and acidic residues" evidence="3">
    <location>
        <begin position="66"/>
        <end position="75"/>
    </location>
</feature>
<feature type="active site" description="Acyl-ester intermediate" evidence="1">
    <location>
        <position position="302"/>
    </location>
</feature>
<feature type="active site" description="Charge relay system" evidence="1">
    <location>
        <position position="366"/>
    </location>
</feature>
<feature type="active site" description="Charge relay system" evidence="1">
    <location>
        <position position="423"/>
    </location>
</feature>
<accession>Q9C8J6</accession>
<proteinExistence type="evidence at protein level"/>
<protein>
    <recommendedName>
        <fullName evidence="8">Phospholipase A1-Igamma3, chloroplastic</fullName>
        <ecNumber evidence="5">3.1.1.-</ecNumber>
    </recommendedName>
    <alternativeName>
        <fullName evidence="9">DAD1-like lipase 2</fullName>
    </alternativeName>
</protein>
<comment type="function">
    <text evidence="5">Acylhydrolase that catalyzes the hydrolysis of phosphatidylcholine at the sn-1 position. Moderate activity toward phosphatidylcholine (PC), monogalactosyldiacylglycerol (MGDG), digalactosyldiacylglycerol (DGDG) and triacylglycerol (TAG).</text>
</comment>
<comment type="catalytic activity">
    <reaction evidence="5">
        <text>1,2-dihexadecanoyl-sn-glycero-3-phosphocholine + H2O = 2-hexadecanoyl-sn-glycero-3-phosphocholine + hexadecanoate + H(+)</text>
        <dbReference type="Rhea" id="RHEA:40487"/>
        <dbReference type="ChEBI" id="CHEBI:7896"/>
        <dbReference type="ChEBI" id="CHEBI:15377"/>
        <dbReference type="ChEBI" id="CHEBI:15378"/>
        <dbReference type="ChEBI" id="CHEBI:72999"/>
        <dbReference type="ChEBI" id="CHEBI:76078"/>
    </reaction>
    <physiologicalReaction direction="left-to-right" evidence="5">
        <dbReference type="Rhea" id="RHEA:40488"/>
    </physiologicalReaction>
</comment>
<comment type="catalytic activity">
    <reaction evidence="5">
        <text>a 1,2-diacyl-3-O-(beta-D-galactosyl)-sn-glycerol + H2O = an acyl-3-O-(beta-D-galactosyl)-sn-glycerol + a fatty acid + H(+)</text>
        <dbReference type="Rhea" id="RHEA:57084"/>
        <dbReference type="ChEBI" id="CHEBI:15377"/>
        <dbReference type="ChEBI" id="CHEBI:15378"/>
        <dbReference type="ChEBI" id="CHEBI:17615"/>
        <dbReference type="ChEBI" id="CHEBI:28868"/>
        <dbReference type="ChEBI" id="CHEBI:141434"/>
    </reaction>
    <physiologicalReaction direction="left-to-right" evidence="5">
        <dbReference type="Rhea" id="RHEA:57085"/>
    </physiologicalReaction>
</comment>
<comment type="catalytic activity">
    <reaction evidence="5">
        <text>a 1,2-diacyl-3-O-[alpha-D-galactosyl-(1-&gt;6)-beta-D-galactosyl]-sn-glycerol + H2O = acyl-3-O-[alpha-D-galactosyl-(1-&gt;6)-beta-D-galactosyl]-sn-glycerol + a fatty acid + H(+)</text>
        <dbReference type="Rhea" id="RHEA:48372"/>
        <dbReference type="ChEBI" id="CHEBI:15377"/>
        <dbReference type="ChEBI" id="CHEBI:15378"/>
        <dbReference type="ChEBI" id="CHEBI:28396"/>
        <dbReference type="ChEBI" id="CHEBI:28868"/>
        <dbReference type="ChEBI" id="CHEBI:90310"/>
    </reaction>
    <physiologicalReaction direction="left-to-right" evidence="5">
        <dbReference type="Rhea" id="RHEA:48373"/>
    </physiologicalReaction>
</comment>
<comment type="subcellular location">
    <subcellularLocation>
        <location evidence="5">Plastid</location>
        <location evidence="5">Chloroplast</location>
    </subcellularLocation>
</comment>
<comment type="tissue specificity">
    <text evidence="5">Highly expressed in flowers. Lower levels in seedlings, leaves and stems.</text>
</comment>
<comment type="induction">
    <text evidence="4 7">Not induced by wounding (PubMed:18267087). Slightly induced by wounding (PubMed:24430866).</text>
</comment>
<comment type="disruption phenotype">
    <text evidence="6">No visible phenotype under standard growth phenotype.</text>
</comment>
<comment type="similarity">
    <text evidence="10">Belongs to the AB hydrolase superfamily. Lipase family.</text>
</comment>
<gene>
    <name evidence="9" type="primary">DALL2</name>
    <name evidence="11" type="ordered locus">At1g51440</name>
    <name evidence="12" type="ORF">F5D21.19</name>
</gene>
<organism>
    <name type="scientific">Arabidopsis thaliana</name>
    <name type="common">Mouse-ear cress</name>
    <dbReference type="NCBI Taxonomy" id="3702"/>
    <lineage>
        <taxon>Eukaryota</taxon>
        <taxon>Viridiplantae</taxon>
        <taxon>Streptophyta</taxon>
        <taxon>Embryophyta</taxon>
        <taxon>Tracheophyta</taxon>
        <taxon>Spermatophyta</taxon>
        <taxon>Magnoliopsida</taxon>
        <taxon>eudicotyledons</taxon>
        <taxon>Gunneridae</taxon>
        <taxon>Pentapetalae</taxon>
        <taxon>rosids</taxon>
        <taxon>malvids</taxon>
        <taxon>Brassicales</taxon>
        <taxon>Brassicaceae</taxon>
        <taxon>Camelineae</taxon>
        <taxon>Arabidopsis</taxon>
    </lineage>
</organism>
<sequence length="527" mass="60321">MASLSLPITLKNPRFFSSSPQNIFKTQPQTLVLTTKFKTCSIICSSSCTSISSSTTQQKQSNKQTHVSDNKREEKAEEEEEEKEVSLREIWREVQGCNNWEGQLDPMNNHLRREIIRYGEFAQACYDSFDFDPHSKYCGSCKYHPSDFFLNLDLHLHKGYTITRYLYATSNINLPNFFQKSKLSSIWSQHANWMGFVAVATDEEEVSRLGRRDIVIAWRGTVTYLEWIYDLKDILCSANFGDDPSIKIELGFHDLYTKKEDSCKFSSFSAREQVLAEVKRLIEYYGTEEEGHKTSITVTGHSLGASLALVSAYDIAELNLNHVPENNYKIPITVFSFSGPRVGNLRFKERCDELGVKVLRVVNVHDKVPSVPGIFTNEKFQFQKYVEEKTSFPWSYAHVGVELALDHKKSPFLKPTKDLGCAHNLEALLHLVDGYHGKDEEAEKRFCLVTKRDIALVNKSCDFLRGEYHVPPCWRQDENKGMVKNGDGQWVLPDRPLLEPHGPEDIAHHLQQVLGKVNDDNFKPTTT</sequence>